<comment type="similarity">
    <text evidence="1">Belongs to the UPF0235 family.</text>
</comment>
<dbReference type="EMBL" id="CP001164">
    <property type="protein sequence ID" value="ACI38206.1"/>
    <property type="molecule type" value="Genomic_DNA"/>
</dbReference>
<dbReference type="RefSeq" id="WP_001277224.1">
    <property type="nucleotide sequence ID" value="NC_011353.1"/>
</dbReference>
<dbReference type="BMRB" id="B5YQF1"/>
<dbReference type="SMR" id="B5YQF1"/>
<dbReference type="KEGG" id="ecf:ECH74115_4256"/>
<dbReference type="HOGENOM" id="CLU_130694_5_0_6"/>
<dbReference type="GO" id="GO:0005737">
    <property type="term" value="C:cytoplasm"/>
    <property type="evidence" value="ECO:0007669"/>
    <property type="project" value="TreeGrafter"/>
</dbReference>
<dbReference type="Gene3D" id="3.30.1200.10">
    <property type="entry name" value="YggU-like"/>
    <property type="match status" value="1"/>
</dbReference>
<dbReference type="HAMAP" id="MF_00634">
    <property type="entry name" value="UPF0235"/>
    <property type="match status" value="1"/>
</dbReference>
<dbReference type="InterPro" id="IPR003746">
    <property type="entry name" value="DUF167"/>
</dbReference>
<dbReference type="InterPro" id="IPR036591">
    <property type="entry name" value="YggU-like_sf"/>
</dbReference>
<dbReference type="NCBIfam" id="TIGR00251">
    <property type="entry name" value="DUF167 family protein"/>
    <property type="match status" value="1"/>
</dbReference>
<dbReference type="NCBIfam" id="NF003466">
    <property type="entry name" value="PRK05090.1"/>
    <property type="match status" value="1"/>
</dbReference>
<dbReference type="PANTHER" id="PTHR13420">
    <property type="entry name" value="UPF0235 PROTEIN C15ORF40"/>
    <property type="match status" value="1"/>
</dbReference>
<dbReference type="PANTHER" id="PTHR13420:SF7">
    <property type="entry name" value="UPF0235 PROTEIN C15ORF40"/>
    <property type="match status" value="1"/>
</dbReference>
<dbReference type="Pfam" id="PF02594">
    <property type="entry name" value="DUF167"/>
    <property type="match status" value="1"/>
</dbReference>
<dbReference type="SMART" id="SM01152">
    <property type="entry name" value="DUF167"/>
    <property type="match status" value="1"/>
</dbReference>
<dbReference type="SUPFAM" id="SSF69786">
    <property type="entry name" value="YggU-like"/>
    <property type="match status" value="1"/>
</dbReference>
<gene>
    <name evidence="1" type="primary">yggU</name>
    <name type="ordered locus">ECH74115_4256</name>
</gene>
<feature type="chain" id="PRO_1000130679" description="UPF0235 protein YggU">
    <location>
        <begin position="1"/>
        <end position="96"/>
    </location>
</feature>
<protein>
    <recommendedName>
        <fullName evidence="1">UPF0235 protein YggU</fullName>
    </recommendedName>
</protein>
<proteinExistence type="inferred from homology"/>
<evidence type="ECO:0000255" key="1">
    <source>
        <dbReference type="HAMAP-Rule" id="MF_00634"/>
    </source>
</evidence>
<sequence length="96" mass="10415">MSAVTVNDDGLVLRLYIQPKASRDSIVGLHGDEVKVAITAPPVDGQANSHLVKFLGKQFRVAKSQVVIEKGELGRHKQIKIINPQQIPPEVAALIN</sequence>
<reference key="1">
    <citation type="journal article" date="2011" name="Proc. Natl. Acad. Sci. U.S.A.">
        <title>Genomic anatomy of Escherichia coli O157:H7 outbreaks.</title>
        <authorList>
            <person name="Eppinger M."/>
            <person name="Mammel M.K."/>
            <person name="Leclerc J.E."/>
            <person name="Ravel J."/>
            <person name="Cebula T.A."/>
        </authorList>
    </citation>
    <scope>NUCLEOTIDE SEQUENCE [LARGE SCALE GENOMIC DNA]</scope>
    <source>
        <strain>EC4115 / EHEC</strain>
    </source>
</reference>
<accession>B5YQF1</accession>
<organism>
    <name type="scientific">Escherichia coli O157:H7 (strain EC4115 / EHEC)</name>
    <dbReference type="NCBI Taxonomy" id="444450"/>
    <lineage>
        <taxon>Bacteria</taxon>
        <taxon>Pseudomonadati</taxon>
        <taxon>Pseudomonadota</taxon>
        <taxon>Gammaproteobacteria</taxon>
        <taxon>Enterobacterales</taxon>
        <taxon>Enterobacteriaceae</taxon>
        <taxon>Escherichia</taxon>
    </lineage>
</organism>
<name>YGGU_ECO5E</name>